<organism>
    <name type="scientific">Burkholderia pseudomallei (strain 668)</name>
    <dbReference type="NCBI Taxonomy" id="320373"/>
    <lineage>
        <taxon>Bacteria</taxon>
        <taxon>Pseudomonadati</taxon>
        <taxon>Pseudomonadota</taxon>
        <taxon>Betaproteobacteria</taxon>
        <taxon>Burkholderiales</taxon>
        <taxon>Burkholderiaceae</taxon>
        <taxon>Burkholderia</taxon>
        <taxon>pseudomallei group</taxon>
    </lineage>
</organism>
<proteinExistence type="inferred from homology"/>
<evidence type="ECO:0000255" key="1">
    <source>
        <dbReference type="HAMAP-Rule" id="MF_01077"/>
    </source>
</evidence>
<feature type="chain" id="PRO_1000064695" description="Ribosome maturation factor RimP">
    <location>
        <begin position="1"/>
        <end position="153"/>
    </location>
</feature>
<accession>A3N8V6</accession>
<protein>
    <recommendedName>
        <fullName evidence="1">Ribosome maturation factor RimP</fullName>
    </recommendedName>
</protein>
<comment type="function">
    <text evidence="1">Required for maturation of 30S ribosomal subunits.</text>
</comment>
<comment type="subcellular location">
    <subcellularLocation>
        <location evidence="1">Cytoplasm</location>
    </subcellularLocation>
</comment>
<comment type="similarity">
    <text evidence="1">Belongs to the RimP family.</text>
</comment>
<gene>
    <name evidence="1" type="primary">rimP</name>
    <name type="ordered locus">BURPS668_1738</name>
</gene>
<keyword id="KW-0963">Cytoplasm</keyword>
<keyword id="KW-0690">Ribosome biogenesis</keyword>
<reference key="1">
    <citation type="journal article" date="2010" name="Genome Biol. Evol.">
        <title>Continuing evolution of Burkholderia mallei through genome reduction and large-scale rearrangements.</title>
        <authorList>
            <person name="Losada L."/>
            <person name="Ronning C.M."/>
            <person name="DeShazer D."/>
            <person name="Woods D."/>
            <person name="Fedorova N."/>
            <person name="Kim H.S."/>
            <person name="Shabalina S.A."/>
            <person name="Pearson T.R."/>
            <person name="Brinkac L."/>
            <person name="Tan P."/>
            <person name="Nandi T."/>
            <person name="Crabtree J."/>
            <person name="Badger J."/>
            <person name="Beckstrom-Sternberg S."/>
            <person name="Saqib M."/>
            <person name="Schutzer S.E."/>
            <person name="Keim P."/>
            <person name="Nierman W.C."/>
        </authorList>
    </citation>
    <scope>NUCLEOTIDE SEQUENCE [LARGE SCALE GENOMIC DNA]</scope>
    <source>
        <strain>668</strain>
    </source>
</reference>
<dbReference type="EMBL" id="CP000570">
    <property type="protein sequence ID" value="ABN82673.1"/>
    <property type="molecule type" value="Genomic_DNA"/>
</dbReference>
<dbReference type="RefSeq" id="WP_004193908.1">
    <property type="nucleotide sequence ID" value="NC_009074.1"/>
</dbReference>
<dbReference type="SMR" id="A3N8V6"/>
<dbReference type="GeneID" id="93060071"/>
<dbReference type="KEGG" id="bpd:BURPS668_1738"/>
<dbReference type="HOGENOM" id="CLU_070525_1_0_4"/>
<dbReference type="GO" id="GO:0005829">
    <property type="term" value="C:cytosol"/>
    <property type="evidence" value="ECO:0007669"/>
    <property type="project" value="TreeGrafter"/>
</dbReference>
<dbReference type="GO" id="GO:0000028">
    <property type="term" value="P:ribosomal small subunit assembly"/>
    <property type="evidence" value="ECO:0007669"/>
    <property type="project" value="TreeGrafter"/>
</dbReference>
<dbReference type="GO" id="GO:0006412">
    <property type="term" value="P:translation"/>
    <property type="evidence" value="ECO:0007669"/>
    <property type="project" value="TreeGrafter"/>
</dbReference>
<dbReference type="CDD" id="cd01734">
    <property type="entry name" value="YlxS_C"/>
    <property type="match status" value="1"/>
</dbReference>
<dbReference type="Gene3D" id="2.30.30.180">
    <property type="entry name" value="Ribosome maturation factor RimP, C-terminal domain"/>
    <property type="match status" value="1"/>
</dbReference>
<dbReference type="Gene3D" id="3.30.300.70">
    <property type="entry name" value="RimP-like superfamily, N-terminal"/>
    <property type="match status" value="1"/>
</dbReference>
<dbReference type="HAMAP" id="MF_01077">
    <property type="entry name" value="RimP"/>
    <property type="match status" value="1"/>
</dbReference>
<dbReference type="InterPro" id="IPR003728">
    <property type="entry name" value="Ribosome_maturation_RimP"/>
</dbReference>
<dbReference type="InterPro" id="IPR028998">
    <property type="entry name" value="RimP_C"/>
</dbReference>
<dbReference type="InterPro" id="IPR036847">
    <property type="entry name" value="RimP_C_sf"/>
</dbReference>
<dbReference type="InterPro" id="IPR028989">
    <property type="entry name" value="RimP_N"/>
</dbReference>
<dbReference type="InterPro" id="IPR035956">
    <property type="entry name" value="RimP_N_sf"/>
</dbReference>
<dbReference type="NCBIfam" id="NF000929">
    <property type="entry name" value="PRK00092.2-1"/>
    <property type="match status" value="1"/>
</dbReference>
<dbReference type="PANTHER" id="PTHR33867">
    <property type="entry name" value="RIBOSOME MATURATION FACTOR RIMP"/>
    <property type="match status" value="1"/>
</dbReference>
<dbReference type="PANTHER" id="PTHR33867:SF1">
    <property type="entry name" value="RIBOSOME MATURATION FACTOR RIMP"/>
    <property type="match status" value="1"/>
</dbReference>
<dbReference type="Pfam" id="PF17384">
    <property type="entry name" value="DUF150_C"/>
    <property type="match status" value="1"/>
</dbReference>
<dbReference type="Pfam" id="PF02576">
    <property type="entry name" value="RimP_N"/>
    <property type="match status" value="1"/>
</dbReference>
<dbReference type="SUPFAM" id="SSF74942">
    <property type="entry name" value="YhbC-like, C-terminal domain"/>
    <property type="match status" value="1"/>
</dbReference>
<dbReference type="SUPFAM" id="SSF75420">
    <property type="entry name" value="YhbC-like, N-terminal domain"/>
    <property type="match status" value="1"/>
</dbReference>
<sequence>MQLTELIETTVTGLGYELVDLERTGRGMVCVYIDQPAGITIDDCEKVTRQLQHVLTVENIDYERLEVSSPGLDRPLKKLADFTRFAGSEAVITLKKPLDGRKTYRGILHAPNGETIGLEFERKKGEAAMLDFTLADIDKARLIPHVDFRSRKQ</sequence>
<name>RIMP_BURP6</name>